<protein>
    <recommendedName>
        <fullName evidence="1">SsrA-binding protein</fullName>
    </recommendedName>
    <alternativeName>
        <fullName evidence="1">Small protein B</fullName>
    </alternativeName>
</protein>
<comment type="function">
    <text evidence="1">Required for rescue of stalled ribosomes mediated by trans-translation. Binds to transfer-messenger RNA (tmRNA), required for stable association of tmRNA with ribosomes. tmRNA and SmpB together mimic tRNA shape, replacing the anticodon stem-loop with SmpB. tmRNA is encoded by the ssrA gene; the 2 termini fold to resemble tRNA(Ala) and it encodes a 'tag peptide', a short internal open reading frame. During trans-translation Ala-aminoacylated tmRNA acts like a tRNA, entering the A-site of stalled ribosomes, displacing the stalled mRNA. The ribosome then switches to translate the ORF on the tmRNA; the nascent peptide is terminated with the 'tag peptide' encoded by the tmRNA and targeted for degradation. The ribosome is freed to recommence translation, which seems to be the essential function of trans-translation.</text>
</comment>
<comment type="subcellular location">
    <subcellularLocation>
        <location evidence="1">Cytoplasm</location>
    </subcellularLocation>
    <text evidence="1">The tmRNA-SmpB complex associates with stalled 70S ribosomes.</text>
</comment>
<comment type="similarity">
    <text evidence="1">Belongs to the SmpB family.</text>
</comment>
<name>SSRP_CORJK</name>
<feature type="chain" id="PRO_0000331036" description="SsrA-binding protein">
    <location>
        <begin position="1"/>
        <end position="184"/>
    </location>
</feature>
<feature type="region of interest" description="Disordered" evidence="2">
    <location>
        <begin position="1"/>
        <end position="31"/>
    </location>
</feature>
<feature type="compositionally biased region" description="Polar residues" evidence="2">
    <location>
        <begin position="1"/>
        <end position="11"/>
    </location>
</feature>
<reference key="1">
    <citation type="journal article" date="2005" name="J. Bacteriol.">
        <title>Complete genome sequence and analysis of the multiresistant nosocomial pathogen Corynebacterium jeikeium K411, a lipid-requiring bacterium of the human skin flora.</title>
        <authorList>
            <person name="Tauch A."/>
            <person name="Kaiser O."/>
            <person name="Hain T."/>
            <person name="Goesmann A."/>
            <person name="Weisshaar B."/>
            <person name="Albersmeier A."/>
            <person name="Bekel T."/>
            <person name="Bischoff N."/>
            <person name="Brune I."/>
            <person name="Chakraborty T."/>
            <person name="Kalinowski J."/>
            <person name="Meyer F."/>
            <person name="Rupp O."/>
            <person name="Schneiker S."/>
            <person name="Viehoever P."/>
            <person name="Puehler A."/>
        </authorList>
    </citation>
    <scope>NUCLEOTIDE SEQUENCE [LARGE SCALE GENOMIC DNA]</scope>
    <source>
        <strain>K411</strain>
    </source>
</reference>
<gene>
    <name evidence="1" type="primary">smpB</name>
    <name type="ordered locus">jk0458</name>
</gene>
<keyword id="KW-0963">Cytoplasm</keyword>
<keyword id="KW-1185">Reference proteome</keyword>
<keyword id="KW-0694">RNA-binding</keyword>
<sequence>MAAKKSTPTDSGKSKGKKNKAQKGAGQKGAGQIVVATNRKARHDYHIIDTYECGVVLVGTEVKSLREGKASLVDAYATIDEGEVWLRGLHIPEYSMGHWTNHSPRRTRKLLLHRREIDSLMGKVRDGNNTLVPLQLYFVAGKLKVELALARGKQEYDKRQDIKRRTEEREITREMGRRIKGIQG</sequence>
<organism>
    <name type="scientific">Corynebacterium jeikeium (strain K411)</name>
    <dbReference type="NCBI Taxonomy" id="306537"/>
    <lineage>
        <taxon>Bacteria</taxon>
        <taxon>Bacillati</taxon>
        <taxon>Actinomycetota</taxon>
        <taxon>Actinomycetes</taxon>
        <taxon>Mycobacteriales</taxon>
        <taxon>Corynebacteriaceae</taxon>
        <taxon>Corynebacterium</taxon>
    </lineage>
</organism>
<accession>Q4JX42</accession>
<proteinExistence type="inferred from homology"/>
<evidence type="ECO:0000255" key="1">
    <source>
        <dbReference type="HAMAP-Rule" id="MF_00023"/>
    </source>
</evidence>
<evidence type="ECO:0000256" key="2">
    <source>
        <dbReference type="SAM" id="MobiDB-lite"/>
    </source>
</evidence>
<dbReference type="EMBL" id="CR931997">
    <property type="protein sequence ID" value="CAI36615.1"/>
    <property type="molecule type" value="Genomic_DNA"/>
</dbReference>
<dbReference type="RefSeq" id="WP_011273138.1">
    <property type="nucleotide sequence ID" value="NC_007164.1"/>
</dbReference>
<dbReference type="SMR" id="Q4JX42"/>
<dbReference type="STRING" id="306537.jk0458"/>
<dbReference type="KEGG" id="cjk:jk0458"/>
<dbReference type="PATRIC" id="fig|306537.10.peg.470"/>
<dbReference type="eggNOG" id="COG0691">
    <property type="taxonomic scope" value="Bacteria"/>
</dbReference>
<dbReference type="HOGENOM" id="CLU_108953_2_1_11"/>
<dbReference type="OrthoDB" id="9805462at2"/>
<dbReference type="Proteomes" id="UP000000545">
    <property type="component" value="Chromosome"/>
</dbReference>
<dbReference type="GO" id="GO:0005829">
    <property type="term" value="C:cytosol"/>
    <property type="evidence" value="ECO:0007669"/>
    <property type="project" value="TreeGrafter"/>
</dbReference>
<dbReference type="GO" id="GO:0003723">
    <property type="term" value="F:RNA binding"/>
    <property type="evidence" value="ECO:0007669"/>
    <property type="project" value="UniProtKB-UniRule"/>
</dbReference>
<dbReference type="GO" id="GO:0070929">
    <property type="term" value="P:trans-translation"/>
    <property type="evidence" value="ECO:0007669"/>
    <property type="project" value="UniProtKB-UniRule"/>
</dbReference>
<dbReference type="CDD" id="cd09294">
    <property type="entry name" value="SmpB"/>
    <property type="match status" value="1"/>
</dbReference>
<dbReference type="Gene3D" id="2.40.280.10">
    <property type="match status" value="1"/>
</dbReference>
<dbReference type="HAMAP" id="MF_00023">
    <property type="entry name" value="SmpB"/>
    <property type="match status" value="1"/>
</dbReference>
<dbReference type="InterPro" id="IPR023620">
    <property type="entry name" value="SmpB"/>
</dbReference>
<dbReference type="InterPro" id="IPR000037">
    <property type="entry name" value="SsrA-bd_prot"/>
</dbReference>
<dbReference type="InterPro" id="IPR020081">
    <property type="entry name" value="SsrA-bd_prot_CS"/>
</dbReference>
<dbReference type="NCBIfam" id="NF003843">
    <property type="entry name" value="PRK05422.1"/>
    <property type="match status" value="1"/>
</dbReference>
<dbReference type="NCBIfam" id="TIGR00086">
    <property type="entry name" value="smpB"/>
    <property type="match status" value="1"/>
</dbReference>
<dbReference type="PANTHER" id="PTHR30308:SF2">
    <property type="entry name" value="SSRA-BINDING PROTEIN"/>
    <property type="match status" value="1"/>
</dbReference>
<dbReference type="PANTHER" id="PTHR30308">
    <property type="entry name" value="TMRNA-BINDING COMPONENT OF TRANS-TRANSLATION TAGGING COMPLEX"/>
    <property type="match status" value="1"/>
</dbReference>
<dbReference type="Pfam" id="PF01668">
    <property type="entry name" value="SmpB"/>
    <property type="match status" value="1"/>
</dbReference>
<dbReference type="SUPFAM" id="SSF74982">
    <property type="entry name" value="Small protein B (SmpB)"/>
    <property type="match status" value="1"/>
</dbReference>
<dbReference type="PROSITE" id="PS01317">
    <property type="entry name" value="SSRP"/>
    <property type="match status" value="1"/>
</dbReference>